<name>PNP_THESQ</name>
<comment type="function">
    <text evidence="1">Involved in mRNA degradation. Catalyzes the phosphorolysis of single-stranded polyribonucleotides processively in the 3'- to 5'-direction.</text>
</comment>
<comment type="catalytic activity">
    <reaction evidence="1">
        <text>RNA(n+1) + phosphate = RNA(n) + a ribonucleoside 5'-diphosphate</text>
        <dbReference type="Rhea" id="RHEA:22096"/>
        <dbReference type="Rhea" id="RHEA-COMP:14527"/>
        <dbReference type="Rhea" id="RHEA-COMP:17342"/>
        <dbReference type="ChEBI" id="CHEBI:43474"/>
        <dbReference type="ChEBI" id="CHEBI:57930"/>
        <dbReference type="ChEBI" id="CHEBI:140395"/>
        <dbReference type="EC" id="2.7.7.8"/>
    </reaction>
</comment>
<comment type="cofactor">
    <cofactor evidence="1">
        <name>Mg(2+)</name>
        <dbReference type="ChEBI" id="CHEBI:18420"/>
    </cofactor>
</comment>
<comment type="subcellular location">
    <subcellularLocation>
        <location evidence="1">Cytoplasm</location>
    </subcellularLocation>
</comment>
<comment type="similarity">
    <text evidence="1">Belongs to the polyribonucleotide nucleotidyltransferase family.</text>
</comment>
<sequence length="708" mass="78621">MKEWRRNILGRELVVQYGKVAKQSSGSALVRFGDTVVLATANISDKAVEGIDFVPLTVEFQERFYAAGKIPGGFIKREGKPSESAILSARLIDRPIRPLFPKKLRNEVQVIVTVLSVDPNVPPDVVGIFAASLALNVSKIPFEGIVAGIRVGYRDGQFIALPSEEDIEKGLMDITVAGTKDAVTMVEGEAKEVTEEDMVKALRFAHSVIKELVDFQEEILSEFNVEKIPVVEPTPPEGLVEAFKDLLNKEELERRILVKVKKEREVALKEYEEQLLNQIAEKLSVTDLEGIKPFVSELYEDAVKKTMRRLIVEKGIRADGRKPTEIRPISCEVGLFPRTHGSALFTRGETQSLGIVTLGAPMDVQIIDTLLEEGVKRFMLHYNFPPFCTGEVKPLRGPSRREIGHGHLAERALKNMLPPEEEFPYTIRVVSEILESNGSSSMATVCSGSLALMDAGVPIKKHVAGIAMGLILEEDAEIILTDIIGMEDHYGDMDFKVAGTRDGITAFQMDCKVSGVSDELLMKALMQAREARMYILDRMYETISAPRPHLSKYAPIIKVTKVDPEKVADVIGPGGRVIKKIIKDFDVKVEIDDETGLVKVVGSSEENVDKAIELIREIAKEIEVGEVLEGKVTRIEPYGLFIEVRPGKIGLLHQSKVGEDMRQFLKKVKVGDTIKVQVINIDDLGRLQFKRVTEGENTQHGKTHSKRN</sequence>
<dbReference type="EC" id="2.7.7.8" evidence="1"/>
<dbReference type="EMBL" id="CP000969">
    <property type="protein sequence ID" value="ACB09828.1"/>
    <property type="molecule type" value="Genomic_DNA"/>
</dbReference>
<dbReference type="RefSeq" id="WP_004081541.1">
    <property type="nucleotide sequence ID" value="NC_010483.1"/>
</dbReference>
<dbReference type="SMR" id="B1LBY0"/>
<dbReference type="KEGG" id="trq:TRQ2_1484"/>
<dbReference type="HOGENOM" id="CLU_004217_2_2_0"/>
<dbReference type="Proteomes" id="UP000001687">
    <property type="component" value="Chromosome"/>
</dbReference>
<dbReference type="GO" id="GO:0005829">
    <property type="term" value="C:cytosol"/>
    <property type="evidence" value="ECO:0007669"/>
    <property type="project" value="TreeGrafter"/>
</dbReference>
<dbReference type="GO" id="GO:0000175">
    <property type="term" value="F:3'-5'-RNA exonuclease activity"/>
    <property type="evidence" value="ECO:0007669"/>
    <property type="project" value="TreeGrafter"/>
</dbReference>
<dbReference type="GO" id="GO:0000287">
    <property type="term" value="F:magnesium ion binding"/>
    <property type="evidence" value="ECO:0007669"/>
    <property type="project" value="UniProtKB-UniRule"/>
</dbReference>
<dbReference type="GO" id="GO:0004654">
    <property type="term" value="F:polyribonucleotide nucleotidyltransferase activity"/>
    <property type="evidence" value="ECO:0007669"/>
    <property type="project" value="UniProtKB-UniRule"/>
</dbReference>
<dbReference type="GO" id="GO:0003723">
    <property type="term" value="F:RNA binding"/>
    <property type="evidence" value="ECO:0007669"/>
    <property type="project" value="UniProtKB-UniRule"/>
</dbReference>
<dbReference type="GO" id="GO:0006402">
    <property type="term" value="P:mRNA catabolic process"/>
    <property type="evidence" value="ECO:0007669"/>
    <property type="project" value="UniProtKB-UniRule"/>
</dbReference>
<dbReference type="GO" id="GO:0006396">
    <property type="term" value="P:RNA processing"/>
    <property type="evidence" value="ECO:0007669"/>
    <property type="project" value="InterPro"/>
</dbReference>
<dbReference type="CDD" id="cd02393">
    <property type="entry name" value="KH-I_PNPase"/>
    <property type="match status" value="1"/>
</dbReference>
<dbReference type="CDD" id="cd11363">
    <property type="entry name" value="RNase_PH_PNPase_1"/>
    <property type="match status" value="1"/>
</dbReference>
<dbReference type="CDD" id="cd11364">
    <property type="entry name" value="RNase_PH_PNPase_2"/>
    <property type="match status" value="1"/>
</dbReference>
<dbReference type="FunFam" id="3.30.1370.10:FF:000001">
    <property type="entry name" value="Polyribonucleotide nucleotidyltransferase"/>
    <property type="match status" value="1"/>
</dbReference>
<dbReference type="FunFam" id="3.30.230.70:FF:000001">
    <property type="entry name" value="Polyribonucleotide nucleotidyltransferase"/>
    <property type="match status" value="1"/>
</dbReference>
<dbReference type="FunFam" id="3.30.230.70:FF:000002">
    <property type="entry name" value="Polyribonucleotide nucleotidyltransferase"/>
    <property type="match status" value="1"/>
</dbReference>
<dbReference type="Gene3D" id="3.30.230.70">
    <property type="entry name" value="GHMP Kinase, N-terminal domain"/>
    <property type="match status" value="2"/>
</dbReference>
<dbReference type="Gene3D" id="3.30.1370.10">
    <property type="entry name" value="K Homology domain, type 1"/>
    <property type="match status" value="1"/>
</dbReference>
<dbReference type="Gene3D" id="2.40.50.140">
    <property type="entry name" value="Nucleic acid-binding proteins"/>
    <property type="match status" value="1"/>
</dbReference>
<dbReference type="HAMAP" id="MF_01595">
    <property type="entry name" value="PNPase"/>
    <property type="match status" value="1"/>
</dbReference>
<dbReference type="InterPro" id="IPR001247">
    <property type="entry name" value="ExoRNase_PH_dom1"/>
</dbReference>
<dbReference type="InterPro" id="IPR015847">
    <property type="entry name" value="ExoRNase_PH_dom2"/>
</dbReference>
<dbReference type="InterPro" id="IPR036345">
    <property type="entry name" value="ExoRNase_PH_dom2_sf"/>
</dbReference>
<dbReference type="InterPro" id="IPR004087">
    <property type="entry name" value="KH_dom"/>
</dbReference>
<dbReference type="InterPro" id="IPR004088">
    <property type="entry name" value="KH_dom_type_1"/>
</dbReference>
<dbReference type="InterPro" id="IPR036612">
    <property type="entry name" value="KH_dom_type_1_sf"/>
</dbReference>
<dbReference type="InterPro" id="IPR012340">
    <property type="entry name" value="NA-bd_OB-fold"/>
</dbReference>
<dbReference type="InterPro" id="IPR012162">
    <property type="entry name" value="PNPase"/>
</dbReference>
<dbReference type="InterPro" id="IPR027408">
    <property type="entry name" value="PNPase/RNase_PH_dom_sf"/>
</dbReference>
<dbReference type="InterPro" id="IPR015848">
    <property type="entry name" value="PNPase_PH_RNA-bd_bac/org-type"/>
</dbReference>
<dbReference type="InterPro" id="IPR020568">
    <property type="entry name" value="Ribosomal_Su5_D2-typ_SF"/>
</dbReference>
<dbReference type="InterPro" id="IPR003029">
    <property type="entry name" value="S1_domain"/>
</dbReference>
<dbReference type="NCBIfam" id="TIGR03591">
    <property type="entry name" value="polynuc_phos"/>
    <property type="match status" value="1"/>
</dbReference>
<dbReference type="NCBIfam" id="NF008805">
    <property type="entry name" value="PRK11824.1"/>
    <property type="match status" value="1"/>
</dbReference>
<dbReference type="PANTHER" id="PTHR11252">
    <property type="entry name" value="POLYRIBONUCLEOTIDE NUCLEOTIDYLTRANSFERASE"/>
    <property type="match status" value="1"/>
</dbReference>
<dbReference type="PANTHER" id="PTHR11252:SF0">
    <property type="entry name" value="POLYRIBONUCLEOTIDE NUCLEOTIDYLTRANSFERASE 1, MITOCHONDRIAL"/>
    <property type="match status" value="1"/>
</dbReference>
<dbReference type="Pfam" id="PF00013">
    <property type="entry name" value="KH_1"/>
    <property type="match status" value="1"/>
</dbReference>
<dbReference type="Pfam" id="PF03726">
    <property type="entry name" value="PNPase"/>
    <property type="match status" value="1"/>
</dbReference>
<dbReference type="Pfam" id="PF01138">
    <property type="entry name" value="RNase_PH"/>
    <property type="match status" value="2"/>
</dbReference>
<dbReference type="Pfam" id="PF03725">
    <property type="entry name" value="RNase_PH_C"/>
    <property type="match status" value="2"/>
</dbReference>
<dbReference type="Pfam" id="PF00575">
    <property type="entry name" value="S1"/>
    <property type="match status" value="1"/>
</dbReference>
<dbReference type="PIRSF" id="PIRSF005499">
    <property type="entry name" value="PNPase"/>
    <property type="match status" value="1"/>
</dbReference>
<dbReference type="SMART" id="SM00322">
    <property type="entry name" value="KH"/>
    <property type="match status" value="1"/>
</dbReference>
<dbReference type="SMART" id="SM00316">
    <property type="entry name" value="S1"/>
    <property type="match status" value="1"/>
</dbReference>
<dbReference type="SUPFAM" id="SSF54791">
    <property type="entry name" value="Eukaryotic type KH-domain (KH-domain type I)"/>
    <property type="match status" value="1"/>
</dbReference>
<dbReference type="SUPFAM" id="SSF50249">
    <property type="entry name" value="Nucleic acid-binding proteins"/>
    <property type="match status" value="1"/>
</dbReference>
<dbReference type="SUPFAM" id="SSF55666">
    <property type="entry name" value="Ribonuclease PH domain 2-like"/>
    <property type="match status" value="2"/>
</dbReference>
<dbReference type="SUPFAM" id="SSF54211">
    <property type="entry name" value="Ribosomal protein S5 domain 2-like"/>
    <property type="match status" value="2"/>
</dbReference>
<dbReference type="PROSITE" id="PS50084">
    <property type="entry name" value="KH_TYPE_1"/>
    <property type="match status" value="1"/>
</dbReference>
<dbReference type="PROSITE" id="PS50126">
    <property type="entry name" value="S1"/>
    <property type="match status" value="1"/>
</dbReference>
<accession>B1LBY0</accession>
<gene>
    <name evidence="1" type="primary">pnp</name>
    <name type="ordered locus">TRQ2_1484</name>
</gene>
<evidence type="ECO:0000255" key="1">
    <source>
        <dbReference type="HAMAP-Rule" id="MF_01595"/>
    </source>
</evidence>
<keyword id="KW-0963">Cytoplasm</keyword>
<keyword id="KW-0460">Magnesium</keyword>
<keyword id="KW-0479">Metal-binding</keyword>
<keyword id="KW-0548">Nucleotidyltransferase</keyword>
<keyword id="KW-0694">RNA-binding</keyword>
<keyword id="KW-0808">Transferase</keyword>
<reference key="1">
    <citation type="journal article" date="2011" name="J. Bacteriol.">
        <title>Genome sequence of Thermotoga sp. strain RQ2, a hyperthermophilic bacterium isolated from a geothermally heated region of the seafloor near Ribeira Quente, the Azores.</title>
        <authorList>
            <person name="Swithers K.S."/>
            <person name="DiPippo J.L."/>
            <person name="Bruce D.C."/>
            <person name="Detter C."/>
            <person name="Tapia R."/>
            <person name="Han S."/>
            <person name="Saunders E."/>
            <person name="Goodwin L.A."/>
            <person name="Han J."/>
            <person name="Woyke T."/>
            <person name="Pitluck S."/>
            <person name="Pennacchio L."/>
            <person name="Nolan M."/>
            <person name="Mikhailova N."/>
            <person name="Lykidis A."/>
            <person name="Land M.L."/>
            <person name="Brettin T."/>
            <person name="Stetter K.O."/>
            <person name="Nelson K.E."/>
            <person name="Gogarten J.P."/>
            <person name="Noll K.M."/>
        </authorList>
    </citation>
    <scope>NUCLEOTIDE SEQUENCE [LARGE SCALE GENOMIC DNA]</scope>
    <source>
        <strain>RQ2</strain>
    </source>
</reference>
<organism>
    <name type="scientific">Thermotoga sp. (strain RQ2)</name>
    <dbReference type="NCBI Taxonomy" id="126740"/>
    <lineage>
        <taxon>Bacteria</taxon>
        <taxon>Thermotogati</taxon>
        <taxon>Thermotogota</taxon>
        <taxon>Thermotogae</taxon>
        <taxon>Thermotogales</taxon>
        <taxon>Thermotogaceae</taxon>
        <taxon>Thermotoga</taxon>
    </lineage>
</organism>
<feature type="chain" id="PRO_1000192501" description="Polyribonucleotide nucleotidyltransferase">
    <location>
        <begin position="1"/>
        <end position="708"/>
    </location>
</feature>
<feature type="domain" description="KH" evidence="1">
    <location>
        <begin position="555"/>
        <end position="615"/>
    </location>
</feature>
<feature type="domain" description="S1 motif" evidence="1">
    <location>
        <begin position="625"/>
        <end position="692"/>
    </location>
</feature>
<feature type="binding site" evidence="1">
    <location>
        <position position="488"/>
    </location>
    <ligand>
        <name>Mg(2+)</name>
        <dbReference type="ChEBI" id="CHEBI:18420"/>
    </ligand>
</feature>
<feature type="binding site" evidence="1">
    <location>
        <position position="494"/>
    </location>
    <ligand>
        <name>Mg(2+)</name>
        <dbReference type="ChEBI" id="CHEBI:18420"/>
    </ligand>
</feature>
<protein>
    <recommendedName>
        <fullName evidence="1">Polyribonucleotide nucleotidyltransferase</fullName>
        <ecNumber evidence="1">2.7.7.8</ecNumber>
    </recommendedName>
    <alternativeName>
        <fullName evidence="1">Polynucleotide phosphorylase</fullName>
        <shortName evidence="1">PNPase</shortName>
    </alternativeName>
</protein>
<proteinExistence type="inferred from homology"/>